<proteinExistence type="evidence at transcript level"/>
<protein>
    <recommendedName>
        <fullName>Putative glycerol-3-phosphate transporter 1</fullName>
        <shortName>G-3-P transporter 1</shortName>
    </recommendedName>
    <alternativeName>
        <fullName>Glycerol-3-phosphate permease 1</fullName>
        <shortName>AtG3Pp1</shortName>
        <shortName>G-3-P permease 1</shortName>
    </alternativeName>
    <alternativeName>
        <fullName>Protein PHOSPHATE STARVATION-INDUCED GENE 3</fullName>
        <shortName>AtPS3</shortName>
    </alternativeName>
</protein>
<comment type="subcellular location">
    <subcellularLocation>
        <location evidence="3">Membrane</location>
        <topology evidence="3">Multi-pass membrane protein</topology>
    </subcellularLocation>
</comment>
<comment type="induction">
    <text evidence="2">By inorganic phosphate (Pi) starvation.</text>
</comment>
<comment type="similarity">
    <text evidence="3">Belongs to the major facilitator superfamily. Organophosphate:Pi antiporter (OPA) (TC 2.A.1.4) family.</text>
</comment>
<comment type="sequence caution" evidence="3">
    <conflict type="erroneous initiation">
        <sequence resource="EMBL-CDS" id="CAB51214"/>
    </conflict>
    <text>Truncated N-terminus.</text>
</comment>
<name>GLPT1_ARATH</name>
<accession>Q9C5L3</accession>
<accession>A0A1I9LTK8</accession>
<accession>Q9STY1</accession>
<feature type="chain" id="PRO_0000403112" description="Putative glycerol-3-phosphate transporter 1">
    <location>
        <begin position="1"/>
        <end position="523"/>
    </location>
</feature>
<feature type="transmembrane region" description="Helical" evidence="1">
    <location>
        <begin position="29"/>
        <end position="49"/>
    </location>
</feature>
<feature type="transmembrane region" description="Helical" evidence="1">
    <location>
        <begin position="102"/>
        <end position="122"/>
    </location>
</feature>
<feature type="transmembrane region" description="Helical" evidence="1">
    <location>
        <begin position="133"/>
        <end position="153"/>
    </location>
</feature>
<feature type="transmembrane region" description="Helical" evidence="1">
    <location>
        <begin position="163"/>
        <end position="183"/>
    </location>
</feature>
<feature type="transmembrane region" description="Helical" evidence="1">
    <location>
        <begin position="196"/>
        <end position="216"/>
    </location>
</feature>
<feature type="transmembrane region" description="Helical" evidence="1">
    <location>
        <begin position="228"/>
        <end position="248"/>
    </location>
</feature>
<feature type="transmembrane region" description="Helical" evidence="1">
    <location>
        <begin position="306"/>
        <end position="326"/>
    </location>
</feature>
<feature type="transmembrane region" description="Helical" evidence="1">
    <location>
        <begin position="344"/>
        <end position="364"/>
    </location>
</feature>
<feature type="transmembrane region" description="Helical" evidence="1">
    <location>
        <begin position="368"/>
        <end position="388"/>
    </location>
</feature>
<feature type="transmembrane region" description="Helical" evidence="1">
    <location>
        <begin position="402"/>
        <end position="422"/>
    </location>
</feature>
<feature type="transmembrane region" description="Helical" evidence="1">
    <location>
        <begin position="444"/>
        <end position="464"/>
    </location>
</feature>
<feature type="transmembrane region" description="Helical" evidence="1">
    <location>
        <begin position="468"/>
        <end position="488"/>
    </location>
</feature>
<sequence>MGSLMQSEPEMEKKPIGIRFLERIKGSKLSYSAYQAIVLIVTFLAYASYHAARKTTSIVKSALDPQSPDTGLNSLLLRFTSFGSSVKEEGGWAPFNGPDGTVLLGEIDVAFLAVYAFGMYFAGHLGDRMNLRIFLTVGMIGTGLFTSLFGVGYWGNIHSFYYFLIMQMLAGLFQSSGWPSVVAVVGNWFNKKKRGLIMGIWNAHTSVGNITGSLIAAAMLRYGWGWSFVVPGVIIVVIGLVNYAFLPVSPENVGAERDEVLDSSSEKIGNSVNEPLLLSSSDSETDDKKRAVGFIEAWRIPGVAPFALCLFFAKLVAYTFLYWLPFYVSHTAIEGEYLSDETAGNLSTMFDVGGVVGGIMAGYISDRIGARAITAASFMYCSIPALFFYRSYGHVSLLANASLMFLTGMLVNGPYALITTAVSADLGTHSSLKGNSRALATVTAIIDGTGSVGAAVGPLLTGYISSRGSWTAVFTMLMGAAFVAGLLLTRLVMAEVAEKIAESRPSEECRSPVDYVQDHVMEV</sequence>
<gene>
    <name type="ordered locus">At3g47420</name>
    <name type="ORF">T21L8.170</name>
</gene>
<evidence type="ECO:0000255" key="1"/>
<evidence type="ECO:0000269" key="2">
    <source>
    </source>
</evidence>
<evidence type="ECO:0000305" key="3"/>
<dbReference type="EMBL" id="AL096860">
    <property type="protein sequence ID" value="CAB51214.1"/>
    <property type="status" value="ALT_INIT"/>
    <property type="molecule type" value="Genomic_DNA"/>
</dbReference>
<dbReference type="EMBL" id="CP002686">
    <property type="protein sequence ID" value="AEE78279.1"/>
    <property type="molecule type" value="Genomic_DNA"/>
</dbReference>
<dbReference type="EMBL" id="CP002686">
    <property type="protein sequence ID" value="ANM65916.1"/>
    <property type="molecule type" value="Genomic_DNA"/>
</dbReference>
<dbReference type="EMBL" id="CP002686">
    <property type="protein sequence ID" value="ANM65917.1"/>
    <property type="molecule type" value="Genomic_DNA"/>
</dbReference>
<dbReference type="EMBL" id="AF325105">
    <property type="protein sequence ID" value="AAK17173.1"/>
    <property type="molecule type" value="mRNA"/>
</dbReference>
<dbReference type="EMBL" id="AF360170">
    <property type="protein sequence ID" value="AAK25880.1"/>
    <property type="molecule type" value="mRNA"/>
</dbReference>
<dbReference type="PIR" id="T12997">
    <property type="entry name" value="T12997"/>
</dbReference>
<dbReference type="SMR" id="Q9C5L3"/>
<dbReference type="FunCoup" id="Q9C5L3">
    <property type="interactions" value="1638"/>
</dbReference>
<dbReference type="STRING" id="3702.Q9C5L3"/>
<dbReference type="iPTMnet" id="Q9C5L3"/>
<dbReference type="PaxDb" id="3702-AT3G47420.1"/>
<dbReference type="ProteomicsDB" id="247397"/>
<dbReference type="EnsemblPlants" id="AT3G47420.1">
    <property type="protein sequence ID" value="AT3G47420.1"/>
    <property type="gene ID" value="AT3G47420"/>
</dbReference>
<dbReference type="EnsemblPlants" id="AT3G47420.2">
    <property type="protein sequence ID" value="AT3G47420.2"/>
    <property type="gene ID" value="AT3G47420"/>
</dbReference>
<dbReference type="EnsemblPlants" id="AT3G47420.3">
    <property type="protein sequence ID" value="AT3G47420.3"/>
    <property type="gene ID" value="AT3G47420"/>
</dbReference>
<dbReference type="Gramene" id="AT3G47420.1">
    <property type="protein sequence ID" value="AT3G47420.1"/>
    <property type="gene ID" value="AT3G47420"/>
</dbReference>
<dbReference type="Gramene" id="AT3G47420.2">
    <property type="protein sequence ID" value="AT3G47420.2"/>
    <property type="gene ID" value="AT3G47420"/>
</dbReference>
<dbReference type="Gramene" id="AT3G47420.3">
    <property type="protein sequence ID" value="AT3G47420.3"/>
    <property type="gene ID" value="AT3G47420"/>
</dbReference>
<dbReference type="KEGG" id="ath:AT3G47420"/>
<dbReference type="Araport" id="AT3G47420"/>
<dbReference type="TAIR" id="AT3G47420">
    <property type="gene designation" value="G3PP1"/>
</dbReference>
<dbReference type="eggNOG" id="KOG2533">
    <property type="taxonomic scope" value="Eukaryota"/>
</dbReference>
<dbReference type="HOGENOM" id="CLU_001265_31_6_1"/>
<dbReference type="InParanoid" id="Q9C5L3"/>
<dbReference type="OMA" id="GTLMWGY"/>
<dbReference type="PhylomeDB" id="Q9C5L3"/>
<dbReference type="BRENDA" id="7.6.2.10">
    <property type="organism ID" value="399"/>
</dbReference>
<dbReference type="PRO" id="PR:Q9C5L3"/>
<dbReference type="Proteomes" id="UP000006548">
    <property type="component" value="Chromosome 3"/>
</dbReference>
<dbReference type="ExpressionAtlas" id="Q9C5L3">
    <property type="expression patterns" value="baseline and differential"/>
</dbReference>
<dbReference type="GO" id="GO:0016020">
    <property type="term" value="C:membrane"/>
    <property type="evidence" value="ECO:0007669"/>
    <property type="project" value="UniProtKB-SubCell"/>
</dbReference>
<dbReference type="GO" id="GO:0022857">
    <property type="term" value="F:transmembrane transporter activity"/>
    <property type="evidence" value="ECO:0007669"/>
    <property type="project" value="InterPro"/>
</dbReference>
<dbReference type="GO" id="GO:0055062">
    <property type="term" value="P:phosphate ion homeostasis"/>
    <property type="evidence" value="ECO:0000270"/>
    <property type="project" value="TAIR"/>
</dbReference>
<dbReference type="FunFam" id="1.20.1250.20:FF:000050">
    <property type="entry name" value="glucose-6-phosphate exchanger SLC37A2 isoform X1"/>
    <property type="match status" value="1"/>
</dbReference>
<dbReference type="FunFam" id="1.20.1250.20:FF:000028">
    <property type="entry name" value="Sugar phosphate exchanger 3 isoform 1"/>
    <property type="match status" value="1"/>
</dbReference>
<dbReference type="Gene3D" id="1.20.1250.20">
    <property type="entry name" value="MFS general substrate transporter like domains"/>
    <property type="match status" value="2"/>
</dbReference>
<dbReference type="InterPro" id="IPR011701">
    <property type="entry name" value="MFS"/>
</dbReference>
<dbReference type="InterPro" id="IPR020846">
    <property type="entry name" value="MFS_dom"/>
</dbReference>
<dbReference type="InterPro" id="IPR036259">
    <property type="entry name" value="MFS_trans_sf"/>
</dbReference>
<dbReference type="InterPro" id="IPR000849">
    <property type="entry name" value="Sugar_P_transporter"/>
</dbReference>
<dbReference type="PANTHER" id="PTHR43184:SF15">
    <property type="entry name" value="GLYCEROL-3-PHOSPHATE TRANSPORTER 1-RELATED"/>
    <property type="match status" value="1"/>
</dbReference>
<dbReference type="PANTHER" id="PTHR43184">
    <property type="entry name" value="MAJOR FACILITATOR SUPERFAMILY TRANSPORTER 16, ISOFORM B"/>
    <property type="match status" value="1"/>
</dbReference>
<dbReference type="Pfam" id="PF07690">
    <property type="entry name" value="MFS_1"/>
    <property type="match status" value="1"/>
</dbReference>
<dbReference type="PIRSF" id="PIRSF002808">
    <property type="entry name" value="Hexose_phosphate_transp"/>
    <property type="match status" value="1"/>
</dbReference>
<dbReference type="SUPFAM" id="SSF103473">
    <property type="entry name" value="MFS general substrate transporter"/>
    <property type="match status" value="1"/>
</dbReference>
<dbReference type="PROSITE" id="PS50850">
    <property type="entry name" value="MFS"/>
    <property type="match status" value="1"/>
</dbReference>
<keyword id="KW-0472">Membrane</keyword>
<keyword id="KW-1185">Reference proteome</keyword>
<keyword id="KW-0762">Sugar transport</keyword>
<keyword id="KW-0812">Transmembrane</keyword>
<keyword id="KW-1133">Transmembrane helix</keyword>
<keyword id="KW-0813">Transport</keyword>
<organism>
    <name type="scientific">Arabidopsis thaliana</name>
    <name type="common">Mouse-ear cress</name>
    <dbReference type="NCBI Taxonomy" id="3702"/>
    <lineage>
        <taxon>Eukaryota</taxon>
        <taxon>Viridiplantae</taxon>
        <taxon>Streptophyta</taxon>
        <taxon>Embryophyta</taxon>
        <taxon>Tracheophyta</taxon>
        <taxon>Spermatophyta</taxon>
        <taxon>Magnoliopsida</taxon>
        <taxon>eudicotyledons</taxon>
        <taxon>Gunneridae</taxon>
        <taxon>Pentapetalae</taxon>
        <taxon>rosids</taxon>
        <taxon>malvids</taxon>
        <taxon>Brassicales</taxon>
        <taxon>Brassicaceae</taxon>
        <taxon>Camelineae</taxon>
        <taxon>Arabidopsis</taxon>
    </lineage>
</organism>
<reference key="1">
    <citation type="journal article" date="2000" name="Nature">
        <title>Sequence and analysis of chromosome 3 of the plant Arabidopsis thaliana.</title>
        <authorList>
            <person name="Salanoubat M."/>
            <person name="Lemcke K."/>
            <person name="Rieger M."/>
            <person name="Ansorge W."/>
            <person name="Unseld M."/>
            <person name="Fartmann B."/>
            <person name="Valle G."/>
            <person name="Bloecker H."/>
            <person name="Perez-Alonso M."/>
            <person name="Obermaier B."/>
            <person name="Delseny M."/>
            <person name="Boutry M."/>
            <person name="Grivell L.A."/>
            <person name="Mache R."/>
            <person name="Puigdomenech P."/>
            <person name="De Simone V."/>
            <person name="Choisne N."/>
            <person name="Artiguenave F."/>
            <person name="Robert C."/>
            <person name="Brottier P."/>
            <person name="Wincker P."/>
            <person name="Cattolico L."/>
            <person name="Weissenbach J."/>
            <person name="Saurin W."/>
            <person name="Quetier F."/>
            <person name="Schaefer M."/>
            <person name="Mueller-Auer S."/>
            <person name="Gabel C."/>
            <person name="Fuchs M."/>
            <person name="Benes V."/>
            <person name="Wurmbach E."/>
            <person name="Drzonek H."/>
            <person name="Erfle H."/>
            <person name="Jordan N."/>
            <person name="Bangert S."/>
            <person name="Wiedelmann R."/>
            <person name="Kranz H."/>
            <person name="Voss H."/>
            <person name="Holland R."/>
            <person name="Brandt P."/>
            <person name="Nyakatura G."/>
            <person name="Vezzi A."/>
            <person name="D'Angelo M."/>
            <person name="Pallavicini A."/>
            <person name="Toppo S."/>
            <person name="Simionati B."/>
            <person name="Conrad A."/>
            <person name="Hornischer K."/>
            <person name="Kauer G."/>
            <person name="Loehnert T.-H."/>
            <person name="Nordsiek G."/>
            <person name="Reichelt J."/>
            <person name="Scharfe M."/>
            <person name="Schoen O."/>
            <person name="Bargues M."/>
            <person name="Terol J."/>
            <person name="Climent J."/>
            <person name="Navarro P."/>
            <person name="Collado C."/>
            <person name="Perez-Perez A."/>
            <person name="Ottenwaelder B."/>
            <person name="Duchemin D."/>
            <person name="Cooke R."/>
            <person name="Laudie M."/>
            <person name="Berger-Llauro C."/>
            <person name="Purnelle B."/>
            <person name="Masuy D."/>
            <person name="de Haan M."/>
            <person name="Maarse A.C."/>
            <person name="Alcaraz J.-P."/>
            <person name="Cottet A."/>
            <person name="Casacuberta E."/>
            <person name="Monfort A."/>
            <person name="Argiriou A."/>
            <person name="Flores M."/>
            <person name="Liguori R."/>
            <person name="Vitale D."/>
            <person name="Mannhaupt G."/>
            <person name="Haase D."/>
            <person name="Schoof H."/>
            <person name="Rudd S."/>
            <person name="Zaccaria P."/>
            <person name="Mewes H.-W."/>
            <person name="Mayer K.F.X."/>
            <person name="Kaul S."/>
            <person name="Town C.D."/>
            <person name="Koo H.L."/>
            <person name="Tallon L.J."/>
            <person name="Jenkins J."/>
            <person name="Rooney T."/>
            <person name="Rizzo M."/>
            <person name="Walts A."/>
            <person name="Utterback T."/>
            <person name="Fujii C.Y."/>
            <person name="Shea T.P."/>
            <person name="Creasy T.H."/>
            <person name="Haas B."/>
            <person name="Maiti R."/>
            <person name="Wu D."/>
            <person name="Peterson J."/>
            <person name="Van Aken S."/>
            <person name="Pai G."/>
            <person name="Militscher J."/>
            <person name="Sellers P."/>
            <person name="Gill J.E."/>
            <person name="Feldblyum T.V."/>
            <person name="Preuss D."/>
            <person name="Lin X."/>
            <person name="Nierman W.C."/>
            <person name="Salzberg S.L."/>
            <person name="White O."/>
            <person name="Venter J.C."/>
            <person name="Fraser C.M."/>
            <person name="Kaneko T."/>
            <person name="Nakamura Y."/>
            <person name="Sato S."/>
            <person name="Kato T."/>
            <person name="Asamizu E."/>
            <person name="Sasamoto S."/>
            <person name="Kimura T."/>
            <person name="Idesawa K."/>
            <person name="Kawashima K."/>
            <person name="Kishida Y."/>
            <person name="Kiyokawa C."/>
            <person name="Kohara M."/>
            <person name="Matsumoto M."/>
            <person name="Matsuno A."/>
            <person name="Muraki A."/>
            <person name="Nakayama S."/>
            <person name="Nakazaki N."/>
            <person name="Shinpo S."/>
            <person name="Takeuchi C."/>
            <person name="Wada T."/>
            <person name="Watanabe A."/>
            <person name="Yamada M."/>
            <person name="Yasuda M."/>
            <person name="Tabata S."/>
        </authorList>
    </citation>
    <scope>NUCLEOTIDE SEQUENCE [LARGE SCALE GENOMIC DNA]</scope>
    <source>
        <strain>cv. Columbia</strain>
    </source>
</reference>
<reference key="2">
    <citation type="journal article" date="2017" name="Plant J.">
        <title>Araport11: a complete reannotation of the Arabidopsis thaliana reference genome.</title>
        <authorList>
            <person name="Cheng C.Y."/>
            <person name="Krishnakumar V."/>
            <person name="Chan A.P."/>
            <person name="Thibaud-Nissen F."/>
            <person name="Schobel S."/>
            <person name="Town C.D."/>
        </authorList>
    </citation>
    <scope>GENOME REANNOTATION</scope>
    <source>
        <strain>cv. Columbia</strain>
    </source>
</reference>
<reference key="3">
    <citation type="journal article" date="2003" name="Science">
        <title>Empirical analysis of transcriptional activity in the Arabidopsis genome.</title>
        <authorList>
            <person name="Yamada K."/>
            <person name="Lim J."/>
            <person name="Dale J.M."/>
            <person name="Chen H."/>
            <person name="Shinn P."/>
            <person name="Palm C.J."/>
            <person name="Southwick A.M."/>
            <person name="Wu H.C."/>
            <person name="Kim C.J."/>
            <person name="Nguyen M."/>
            <person name="Pham P.K."/>
            <person name="Cheuk R.F."/>
            <person name="Karlin-Newmann G."/>
            <person name="Liu S.X."/>
            <person name="Lam B."/>
            <person name="Sakano H."/>
            <person name="Wu T."/>
            <person name="Yu G."/>
            <person name="Miranda M."/>
            <person name="Quach H.L."/>
            <person name="Tripp M."/>
            <person name="Chang C.H."/>
            <person name="Lee J.M."/>
            <person name="Toriumi M.J."/>
            <person name="Chan M.M."/>
            <person name="Tang C.C."/>
            <person name="Onodera C.S."/>
            <person name="Deng J.M."/>
            <person name="Akiyama K."/>
            <person name="Ansari Y."/>
            <person name="Arakawa T."/>
            <person name="Banh J."/>
            <person name="Banno F."/>
            <person name="Bowser L."/>
            <person name="Brooks S.Y."/>
            <person name="Carninci P."/>
            <person name="Chao Q."/>
            <person name="Choy N."/>
            <person name="Enju A."/>
            <person name="Goldsmith A.D."/>
            <person name="Gurjal M."/>
            <person name="Hansen N.F."/>
            <person name="Hayashizaki Y."/>
            <person name="Johnson-Hopson C."/>
            <person name="Hsuan V.W."/>
            <person name="Iida K."/>
            <person name="Karnes M."/>
            <person name="Khan S."/>
            <person name="Koesema E."/>
            <person name="Ishida J."/>
            <person name="Jiang P.X."/>
            <person name="Jones T."/>
            <person name="Kawai J."/>
            <person name="Kamiya A."/>
            <person name="Meyers C."/>
            <person name="Nakajima M."/>
            <person name="Narusaka M."/>
            <person name="Seki M."/>
            <person name="Sakurai T."/>
            <person name="Satou M."/>
            <person name="Tamse R."/>
            <person name="Vaysberg M."/>
            <person name="Wallender E.K."/>
            <person name="Wong C."/>
            <person name="Yamamura Y."/>
            <person name="Yuan S."/>
            <person name="Shinozaki K."/>
            <person name="Davis R.W."/>
            <person name="Theologis A."/>
            <person name="Ecker J.R."/>
        </authorList>
    </citation>
    <scope>NUCLEOTIDE SEQUENCE [LARGE SCALE MRNA]</scope>
    <source>
        <strain>cv. Columbia</strain>
    </source>
</reference>
<reference key="4">
    <citation type="journal article" date="2005" name="Proc. Natl. Acad. Sci. U.S.A.">
        <title>The Arabidopsis SUMO E3 ligase SIZ1 controls phosphate deficiency responses.</title>
        <authorList>
            <person name="Miura K."/>
            <person name="Rus A."/>
            <person name="Sharkhuu A."/>
            <person name="Yokoi S."/>
            <person name="Karthikeyan A.S."/>
            <person name="Raghothama K.G."/>
            <person name="Baek D."/>
            <person name="Koo Y.D."/>
            <person name="Jin J.B."/>
            <person name="Bressan R.A."/>
            <person name="Yun D.-J."/>
            <person name="Hasegawa P.M."/>
        </authorList>
    </citation>
    <scope>INDUCTION</scope>
</reference>